<organism>
    <name type="scientific">Eremothecium gossypii (strain ATCC 10895 / CBS 109.51 / FGSC 9923 / NRRL Y-1056)</name>
    <name type="common">Yeast</name>
    <name type="synonym">Ashbya gossypii</name>
    <dbReference type="NCBI Taxonomy" id="284811"/>
    <lineage>
        <taxon>Eukaryota</taxon>
        <taxon>Fungi</taxon>
        <taxon>Dikarya</taxon>
        <taxon>Ascomycota</taxon>
        <taxon>Saccharomycotina</taxon>
        <taxon>Saccharomycetes</taxon>
        <taxon>Saccharomycetales</taxon>
        <taxon>Saccharomycetaceae</taxon>
        <taxon>Eremothecium</taxon>
    </lineage>
</organism>
<accession>Q757J8</accession>
<gene>
    <name type="primary">IPP1</name>
    <name type="ordered locus">AER015C</name>
</gene>
<protein>
    <recommendedName>
        <fullName>Inorganic pyrophosphatase</fullName>
        <ecNumber>3.6.1.1</ecNumber>
    </recommendedName>
    <alternativeName>
        <fullName>Pyrophosphate phospho-hydrolase</fullName>
        <shortName>PPase</shortName>
    </alternativeName>
</protein>
<reference key="1">
    <citation type="journal article" date="2004" name="Science">
        <title>The Ashbya gossypii genome as a tool for mapping the ancient Saccharomyces cerevisiae genome.</title>
        <authorList>
            <person name="Dietrich F.S."/>
            <person name="Voegeli S."/>
            <person name="Brachat S."/>
            <person name="Lerch A."/>
            <person name="Gates K."/>
            <person name="Steiner S."/>
            <person name="Mohr C."/>
            <person name="Poehlmann R."/>
            <person name="Luedi P."/>
            <person name="Choi S."/>
            <person name="Wing R.A."/>
            <person name="Flavier A."/>
            <person name="Gaffney T.D."/>
            <person name="Philippsen P."/>
        </authorList>
    </citation>
    <scope>NUCLEOTIDE SEQUENCE [LARGE SCALE GENOMIC DNA]</scope>
    <source>
        <strain>ATCC 10895 / CBS 109.51 / FGSC 9923 / NRRL Y-1056</strain>
    </source>
</reference>
<reference key="2">
    <citation type="journal article" date="2013" name="G3 (Bethesda)">
        <title>Genomes of Ashbya fungi isolated from insects reveal four mating-type loci, numerous translocations, lack of transposons, and distinct gene duplications.</title>
        <authorList>
            <person name="Dietrich F.S."/>
            <person name="Voegeli S."/>
            <person name="Kuo S."/>
            <person name="Philippsen P."/>
        </authorList>
    </citation>
    <scope>GENOME REANNOTATION</scope>
    <source>
        <strain>ATCC 10895 / CBS 109.51 / FGSC 9923 / NRRL Y-1056</strain>
    </source>
</reference>
<sequence length="287" mass="32278">MSYTTRQIGAKNTLDYRVFIEKAGKVVSPFHDIPLYADEENQIFNMVVEIPRWTNAKLEITKEEAMNPIIQDTKKGKLRYVRNCFPHHGYIHNYGAFPQTWEDPNVAHPETKAYGDNDPLDVLEIGETIAYTGQVKQVKVLGVMALLDEGETDWKIIVIDVHDPLAPKLNDIEDVEKHLPGLLRATNEWFRIYKIPDGKPENQFAFSGEAKNRKYALDVIRECHEAWCQLVAGKAADDKKVSLANSTLQESVAYAPEVAAAVPAANPLPDAPIDKSIDKWFFISGSA</sequence>
<name>IPYR_EREGS</name>
<keyword id="KW-0963">Cytoplasm</keyword>
<keyword id="KW-0378">Hydrolase</keyword>
<keyword id="KW-0460">Magnesium</keyword>
<keyword id="KW-0479">Metal-binding</keyword>
<keyword id="KW-1185">Reference proteome</keyword>
<feature type="chain" id="PRO_0000137579" description="Inorganic pyrophosphatase">
    <location>
        <begin position="1"/>
        <end position="287"/>
    </location>
</feature>
<feature type="binding site" evidence="1">
    <location>
        <position position="79"/>
    </location>
    <ligand>
        <name>diphosphate</name>
        <dbReference type="ChEBI" id="CHEBI:33019"/>
    </ligand>
</feature>
<feature type="binding site" evidence="1">
    <location>
        <position position="116"/>
    </location>
    <ligand>
        <name>Mg(2+)</name>
        <dbReference type="ChEBI" id="CHEBI:18420"/>
        <label>1</label>
    </ligand>
</feature>
<feature type="binding site" evidence="1">
    <location>
        <position position="121"/>
    </location>
    <ligand>
        <name>Mg(2+)</name>
        <dbReference type="ChEBI" id="CHEBI:18420"/>
        <label>1</label>
    </ligand>
</feature>
<feature type="binding site" evidence="1">
    <location>
        <position position="121"/>
    </location>
    <ligand>
        <name>Mg(2+)</name>
        <dbReference type="ChEBI" id="CHEBI:18420"/>
        <label>2</label>
    </ligand>
</feature>
<feature type="binding site" evidence="1">
    <location>
        <position position="153"/>
    </location>
    <ligand>
        <name>Mg(2+)</name>
        <dbReference type="ChEBI" id="CHEBI:18420"/>
        <label>1</label>
    </ligand>
</feature>
<comment type="catalytic activity">
    <reaction>
        <text>diphosphate + H2O = 2 phosphate + H(+)</text>
        <dbReference type="Rhea" id="RHEA:24576"/>
        <dbReference type="ChEBI" id="CHEBI:15377"/>
        <dbReference type="ChEBI" id="CHEBI:15378"/>
        <dbReference type="ChEBI" id="CHEBI:33019"/>
        <dbReference type="ChEBI" id="CHEBI:43474"/>
        <dbReference type="EC" id="3.6.1.1"/>
    </reaction>
</comment>
<comment type="cofactor">
    <cofactor evidence="1">
        <name>Mg(2+)</name>
        <dbReference type="ChEBI" id="CHEBI:18420"/>
    </cofactor>
</comment>
<comment type="subcellular location">
    <subcellularLocation>
        <location evidence="1">Cytoplasm</location>
    </subcellularLocation>
</comment>
<comment type="similarity">
    <text evidence="2">Belongs to the PPase family.</text>
</comment>
<proteinExistence type="inferred from homology"/>
<evidence type="ECO:0000250" key="1"/>
<evidence type="ECO:0000305" key="2"/>
<dbReference type="EC" id="3.6.1.1"/>
<dbReference type="EMBL" id="AE016818">
    <property type="protein sequence ID" value="AAS52699.1"/>
    <property type="molecule type" value="Genomic_DNA"/>
</dbReference>
<dbReference type="RefSeq" id="NP_984875.1">
    <property type="nucleotide sequence ID" value="NM_210229.1"/>
</dbReference>
<dbReference type="SMR" id="Q757J8"/>
<dbReference type="FunCoup" id="Q757J8">
    <property type="interactions" value="1079"/>
</dbReference>
<dbReference type="STRING" id="284811.Q757J8"/>
<dbReference type="EnsemblFungi" id="AAS52699">
    <property type="protein sequence ID" value="AAS52699"/>
    <property type="gene ID" value="AGOS_AER015C"/>
</dbReference>
<dbReference type="GeneID" id="4621075"/>
<dbReference type="KEGG" id="ago:AGOS_AER015C"/>
<dbReference type="eggNOG" id="KOG1626">
    <property type="taxonomic scope" value="Eukaryota"/>
</dbReference>
<dbReference type="HOGENOM" id="CLU_040684_0_1_1"/>
<dbReference type="InParanoid" id="Q757J8"/>
<dbReference type="OMA" id="LYANEQK"/>
<dbReference type="OrthoDB" id="1608002at2759"/>
<dbReference type="Proteomes" id="UP000000591">
    <property type="component" value="Chromosome V"/>
</dbReference>
<dbReference type="GO" id="GO:0005737">
    <property type="term" value="C:cytoplasm"/>
    <property type="evidence" value="ECO:0007669"/>
    <property type="project" value="UniProtKB-SubCell"/>
</dbReference>
<dbReference type="GO" id="GO:0004427">
    <property type="term" value="F:inorganic diphosphate phosphatase activity"/>
    <property type="evidence" value="ECO:0000318"/>
    <property type="project" value="GO_Central"/>
</dbReference>
<dbReference type="GO" id="GO:0000287">
    <property type="term" value="F:magnesium ion binding"/>
    <property type="evidence" value="ECO:0007669"/>
    <property type="project" value="InterPro"/>
</dbReference>
<dbReference type="GO" id="GO:0006796">
    <property type="term" value="P:phosphate-containing compound metabolic process"/>
    <property type="evidence" value="ECO:0000318"/>
    <property type="project" value="GO_Central"/>
</dbReference>
<dbReference type="CDD" id="cd00412">
    <property type="entry name" value="pyrophosphatase"/>
    <property type="match status" value="1"/>
</dbReference>
<dbReference type="FunFam" id="3.90.80.10:FF:000004">
    <property type="entry name" value="Inorganic pyrophosphatase"/>
    <property type="match status" value="1"/>
</dbReference>
<dbReference type="Gene3D" id="3.90.80.10">
    <property type="entry name" value="Inorganic pyrophosphatase"/>
    <property type="match status" value="1"/>
</dbReference>
<dbReference type="InterPro" id="IPR008162">
    <property type="entry name" value="Pyrophosphatase"/>
</dbReference>
<dbReference type="InterPro" id="IPR036649">
    <property type="entry name" value="Pyrophosphatase_sf"/>
</dbReference>
<dbReference type="PANTHER" id="PTHR10286">
    <property type="entry name" value="INORGANIC PYROPHOSPHATASE"/>
    <property type="match status" value="1"/>
</dbReference>
<dbReference type="Pfam" id="PF00719">
    <property type="entry name" value="Pyrophosphatase"/>
    <property type="match status" value="1"/>
</dbReference>
<dbReference type="SUPFAM" id="SSF50324">
    <property type="entry name" value="Inorganic pyrophosphatase"/>
    <property type="match status" value="1"/>
</dbReference>
<dbReference type="PROSITE" id="PS00387">
    <property type="entry name" value="PPASE"/>
    <property type="match status" value="1"/>
</dbReference>